<protein>
    <recommendedName>
        <fullName>Orotidine 5'-phosphate decarboxylase</fullName>
        <ecNumber>4.1.1.23</ecNumber>
    </recommendedName>
    <alternativeName>
        <fullName>OMP decarboxylase</fullName>
        <shortName>OMPDCase</shortName>
        <shortName>OMPdecase</shortName>
    </alternativeName>
    <alternativeName>
        <fullName>Uridine 5'-monophosphate synthase</fullName>
        <shortName>UMP synthase</shortName>
    </alternativeName>
</protein>
<evidence type="ECO:0000250" key="1"/>
<evidence type="ECO:0000255" key="2">
    <source>
        <dbReference type="PROSITE-ProRule" id="PRU10110"/>
    </source>
</evidence>
<evidence type="ECO:0000305" key="3"/>
<keyword id="KW-0210">Decarboxylase</keyword>
<keyword id="KW-0456">Lyase</keyword>
<keyword id="KW-0665">Pyrimidine biosynthesis</keyword>
<keyword id="KW-1185">Reference proteome</keyword>
<reference key="1">
    <citation type="journal article" date="1987" name="Gene">
        <title>Cloning, mapping and molecular analysis of the pyrG (orotidine-5'-phosphate decarboxylase) gene of Aspergillus nidulans.</title>
        <authorList>
            <person name="Oakley B.R."/>
            <person name="Rinehart J.E."/>
            <person name="Mitchell B.L."/>
            <person name="Oakley C.E."/>
            <person name="Carmona C."/>
            <person name="Gray G.L."/>
            <person name="May G.S."/>
        </authorList>
    </citation>
    <scope>NUCLEOTIDE SEQUENCE [GENOMIC DNA]</scope>
</reference>
<reference key="2">
    <citation type="journal article" date="2005" name="Nature">
        <title>Sequencing of Aspergillus nidulans and comparative analysis with A. fumigatus and A. oryzae.</title>
        <authorList>
            <person name="Galagan J.E."/>
            <person name="Calvo S.E."/>
            <person name="Cuomo C."/>
            <person name="Ma L.-J."/>
            <person name="Wortman J.R."/>
            <person name="Batzoglou S."/>
            <person name="Lee S.-I."/>
            <person name="Bastuerkmen M."/>
            <person name="Spevak C.C."/>
            <person name="Clutterbuck J."/>
            <person name="Kapitonov V."/>
            <person name="Jurka J."/>
            <person name="Scazzocchio C."/>
            <person name="Farman M.L."/>
            <person name="Butler J."/>
            <person name="Purcell S."/>
            <person name="Harris S."/>
            <person name="Braus G.H."/>
            <person name="Draht O."/>
            <person name="Busch S."/>
            <person name="D'Enfert C."/>
            <person name="Bouchier C."/>
            <person name="Goldman G.H."/>
            <person name="Bell-Pedersen D."/>
            <person name="Griffiths-Jones S."/>
            <person name="Doonan J.H."/>
            <person name="Yu J."/>
            <person name="Vienken K."/>
            <person name="Pain A."/>
            <person name="Freitag M."/>
            <person name="Selker E.U."/>
            <person name="Archer D.B."/>
            <person name="Penalva M.A."/>
            <person name="Oakley B.R."/>
            <person name="Momany M."/>
            <person name="Tanaka T."/>
            <person name="Kumagai T."/>
            <person name="Asai K."/>
            <person name="Machida M."/>
            <person name="Nierman W.C."/>
            <person name="Denning D.W."/>
            <person name="Caddick M.X."/>
            <person name="Hynes M."/>
            <person name="Paoletti M."/>
            <person name="Fischer R."/>
            <person name="Miller B.L."/>
            <person name="Dyer P.S."/>
            <person name="Sachs M.S."/>
            <person name="Osmani S.A."/>
            <person name="Birren B.W."/>
        </authorList>
    </citation>
    <scope>NUCLEOTIDE SEQUENCE [LARGE SCALE GENOMIC DNA]</scope>
    <source>
        <strain>FGSC A4 / ATCC 38163 / CBS 112.46 / NRRL 194 / M139</strain>
    </source>
</reference>
<reference key="3">
    <citation type="journal article" date="2009" name="Fungal Genet. Biol.">
        <title>The 2008 update of the Aspergillus nidulans genome annotation: a community effort.</title>
        <authorList>
            <person name="Wortman J.R."/>
            <person name="Gilsenan J.M."/>
            <person name="Joardar V."/>
            <person name="Deegan J."/>
            <person name="Clutterbuck J."/>
            <person name="Andersen M.R."/>
            <person name="Archer D."/>
            <person name="Bencina M."/>
            <person name="Braus G."/>
            <person name="Coutinho P."/>
            <person name="von Dohren H."/>
            <person name="Doonan J."/>
            <person name="Driessen A.J."/>
            <person name="Durek P."/>
            <person name="Espeso E."/>
            <person name="Fekete E."/>
            <person name="Flipphi M."/>
            <person name="Estrada C.G."/>
            <person name="Geysens S."/>
            <person name="Goldman G."/>
            <person name="de Groot P.W."/>
            <person name="Hansen K."/>
            <person name="Harris S.D."/>
            <person name="Heinekamp T."/>
            <person name="Helmstaedt K."/>
            <person name="Henrissat B."/>
            <person name="Hofmann G."/>
            <person name="Homan T."/>
            <person name="Horio T."/>
            <person name="Horiuchi H."/>
            <person name="James S."/>
            <person name="Jones M."/>
            <person name="Karaffa L."/>
            <person name="Karanyi Z."/>
            <person name="Kato M."/>
            <person name="Keller N."/>
            <person name="Kelly D.E."/>
            <person name="Kiel J.A."/>
            <person name="Kim J.M."/>
            <person name="van der Klei I.J."/>
            <person name="Klis F.M."/>
            <person name="Kovalchuk A."/>
            <person name="Krasevec N."/>
            <person name="Kubicek C.P."/>
            <person name="Liu B."/>
            <person name="Maccabe A."/>
            <person name="Meyer V."/>
            <person name="Mirabito P."/>
            <person name="Miskei M."/>
            <person name="Mos M."/>
            <person name="Mullins J."/>
            <person name="Nelson D.R."/>
            <person name="Nielsen J."/>
            <person name="Oakley B.R."/>
            <person name="Osmani S.A."/>
            <person name="Pakula T."/>
            <person name="Paszewski A."/>
            <person name="Paulsen I."/>
            <person name="Pilsyk S."/>
            <person name="Pocsi I."/>
            <person name="Punt P.J."/>
            <person name="Ram A.F."/>
            <person name="Ren Q."/>
            <person name="Robellet X."/>
            <person name="Robson G."/>
            <person name="Seiboth B."/>
            <person name="van Solingen P."/>
            <person name="Specht T."/>
            <person name="Sun J."/>
            <person name="Taheri-Talesh N."/>
            <person name="Takeshita N."/>
            <person name="Ussery D."/>
            <person name="vanKuyk P.A."/>
            <person name="Visser H."/>
            <person name="van de Vondervoort P.J."/>
            <person name="de Vries R.P."/>
            <person name="Walton J."/>
            <person name="Xiang X."/>
            <person name="Xiong Y."/>
            <person name="Zeng A.P."/>
            <person name="Brandt B.W."/>
            <person name="Cornell M.J."/>
            <person name="van den Hondel C.A."/>
            <person name="Visser J."/>
            <person name="Oliver S.G."/>
            <person name="Turner G."/>
        </authorList>
    </citation>
    <scope>GENOME REANNOTATION</scope>
    <source>
        <strain>FGSC A4 / ATCC 38163 / CBS 112.46 / NRRL 194 / M139</strain>
    </source>
</reference>
<comment type="catalytic activity">
    <reaction evidence="2">
        <text>orotidine 5'-phosphate + H(+) = UMP + CO2</text>
        <dbReference type="Rhea" id="RHEA:11596"/>
        <dbReference type="ChEBI" id="CHEBI:15378"/>
        <dbReference type="ChEBI" id="CHEBI:16526"/>
        <dbReference type="ChEBI" id="CHEBI:57538"/>
        <dbReference type="ChEBI" id="CHEBI:57865"/>
        <dbReference type="EC" id="4.1.1.23"/>
    </reaction>
</comment>
<comment type="pathway">
    <text>Pyrimidine metabolism; UMP biosynthesis via de novo pathway; UMP from orotate: step 2/2.</text>
</comment>
<comment type="similarity">
    <text evidence="3">Belongs to the OMP decarboxylase family.</text>
</comment>
<gene>
    <name type="primary">pyrG</name>
    <name type="ORF">AN6157</name>
</gene>
<feature type="chain" id="PRO_0000134659" description="Orotidine 5'-phosphate decarboxylase">
    <location>
        <begin position="1"/>
        <end position="274"/>
    </location>
</feature>
<feature type="active site" description="Proton donor" evidence="2">
    <location>
        <position position="95"/>
    </location>
</feature>
<feature type="binding site" evidence="1">
    <location>
        <position position="40"/>
    </location>
    <ligand>
        <name>substrate</name>
    </ligand>
</feature>
<feature type="binding site" evidence="1">
    <location>
        <begin position="62"/>
        <end position="64"/>
    </location>
    <ligand>
        <name>substrate</name>
    </ligand>
</feature>
<feature type="binding site" evidence="1">
    <location>
        <begin position="93"/>
        <end position="102"/>
    </location>
    <ligand>
        <name>substrate</name>
    </ligand>
</feature>
<feature type="binding site" evidence="1">
    <location>
        <position position="227"/>
    </location>
    <ligand>
        <name>substrate</name>
    </ligand>
</feature>
<feature type="binding site" evidence="1">
    <location>
        <position position="245"/>
    </location>
    <ligand>
        <name>substrate</name>
    </ligand>
</feature>
<feature type="sequence conflict" description="In Ref. 1; AAB66359." evidence="3" ref="1">
    <original>YT</original>
    <variation>SQ</variation>
    <location>
        <begin position="169"/>
        <end position="170"/>
    </location>
</feature>
<proteinExistence type="inferred from homology"/>
<accession>P10652</accession>
<accession>C8V298</accession>
<accession>Q5AZX3</accession>
<dbReference type="EC" id="4.1.1.23"/>
<dbReference type="EMBL" id="M19132">
    <property type="protein sequence ID" value="AAB66359.1"/>
    <property type="molecule type" value="Genomic_DNA"/>
</dbReference>
<dbReference type="EMBL" id="AACD01000105">
    <property type="protein sequence ID" value="EAA57943.1"/>
    <property type="molecule type" value="Genomic_DNA"/>
</dbReference>
<dbReference type="EMBL" id="BN001301">
    <property type="protein sequence ID" value="CBF70070.1"/>
    <property type="molecule type" value="Genomic_DNA"/>
</dbReference>
<dbReference type="PIR" id="A29630">
    <property type="entry name" value="DCASOE"/>
</dbReference>
<dbReference type="RefSeq" id="XP_663761.1">
    <property type="nucleotide sequence ID" value="XM_658669.1"/>
</dbReference>
<dbReference type="SMR" id="P10652"/>
<dbReference type="FunCoup" id="P10652">
    <property type="interactions" value="1097"/>
</dbReference>
<dbReference type="STRING" id="227321.P10652"/>
<dbReference type="EnsemblFungi" id="CBF70070">
    <property type="protein sequence ID" value="CBF70070"/>
    <property type="gene ID" value="ANIA_06157"/>
</dbReference>
<dbReference type="GeneID" id="2870752"/>
<dbReference type="KEGG" id="ani:ANIA_06157"/>
<dbReference type="VEuPathDB" id="FungiDB:AN6157"/>
<dbReference type="eggNOG" id="KOG1377">
    <property type="taxonomic scope" value="Eukaryota"/>
</dbReference>
<dbReference type="HOGENOM" id="CLU_030821_0_0_1"/>
<dbReference type="InParanoid" id="P10652"/>
<dbReference type="OMA" id="CLIKTHI"/>
<dbReference type="OrthoDB" id="10263753at2759"/>
<dbReference type="UniPathway" id="UPA00070">
    <property type="reaction ID" value="UER00120"/>
</dbReference>
<dbReference type="Proteomes" id="UP000000560">
    <property type="component" value="Chromosome I"/>
</dbReference>
<dbReference type="GO" id="GO:0005829">
    <property type="term" value="C:cytosol"/>
    <property type="evidence" value="ECO:0000318"/>
    <property type="project" value="GO_Central"/>
</dbReference>
<dbReference type="GO" id="GO:0004590">
    <property type="term" value="F:orotidine-5'-phosphate decarboxylase activity"/>
    <property type="evidence" value="ECO:0000315"/>
    <property type="project" value="AspGD"/>
</dbReference>
<dbReference type="GO" id="GO:0006207">
    <property type="term" value="P:'de novo' pyrimidine nucleobase biosynthetic process"/>
    <property type="evidence" value="ECO:0000315"/>
    <property type="project" value="AspGD"/>
</dbReference>
<dbReference type="GO" id="GO:0044205">
    <property type="term" value="P:'de novo' UMP biosynthetic process"/>
    <property type="evidence" value="ECO:0007669"/>
    <property type="project" value="UniProtKB-UniPathway"/>
</dbReference>
<dbReference type="GO" id="GO:0000909">
    <property type="term" value="P:sporocarp development involved in sexual reproduction"/>
    <property type="evidence" value="ECO:0000315"/>
    <property type="project" value="AspGD"/>
</dbReference>
<dbReference type="CDD" id="cd04725">
    <property type="entry name" value="OMP_decarboxylase_like"/>
    <property type="match status" value="1"/>
</dbReference>
<dbReference type="FunFam" id="3.20.20.70:FF:000114">
    <property type="entry name" value="Decarboxylase,orotidine phosphate"/>
    <property type="match status" value="1"/>
</dbReference>
<dbReference type="Gene3D" id="3.20.20.70">
    <property type="entry name" value="Aldolase class I"/>
    <property type="match status" value="1"/>
</dbReference>
<dbReference type="InterPro" id="IPR013785">
    <property type="entry name" value="Aldolase_TIM"/>
</dbReference>
<dbReference type="InterPro" id="IPR014732">
    <property type="entry name" value="OMPdecase"/>
</dbReference>
<dbReference type="InterPro" id="IPR018089">
    <property type="entry name" value="OMPdecase_AS"/>
</dbReference>
<dbReference type="InterPro" id="IPR001754">
    <property type="entry name" value="OMPdeCOase_dom"/>
</dbReference>
<dbReference type="InterPro" id="IPR011060">
    <property type="entry name" value="RibuloseP-bd_barrel"/>
</dbReference>
<dbReference type="NCBIfam" id="TIGR01740">
    <property type="entry name" value="pyrF"/>
    <property type="match status" value="1"/>
</dbReference>
<dbReference type="PANTHER" id="PTHR32119">
    <property type="entry name" value="OROTIDINE 5'-PHOSPHATE DECARBOXYLASE"/>
    <property type="match status" value="1"/>
</dbReference>
<dbReference type="PANTHER" id="PTHR32119:SF2">
    <property type="entry name" value="OROTIDINE 5'-PHOSPHATE DECARBOXYLASE"/>
    <property type="match status" value="1"/>
</dbReference>
<dbReference type="Pfam" id="PF00215">
    <property type="entry name" value="OMPdecase"/>
    <property type="match status" value="1"/>
</dbReference>
<dbReference type="SMART" id="SM00934">
    <property type="entry name" value="OMPdecase"/>
    <property type="match status" value="1"/>
</dbReference>
<dbReference type="SUPFAM" id="SSF51366">
    <property type="entry name" value="Ribulose-phoshate binding barrel"/>
    <property type="match status" value="1"/>
</dbReference>
<dbReference type="PROSITE" id="PS00156">
    <property type="entry name" value="OMPDECASE"/>
    <property type="match status" value="1"/>
</dbReference>
<organism>
    <name type="scientific">Emericella nidulans (strain FGSC A4 / ATCC 38163 / CBS 112.46 / NRRL 194 / M139)</name>
    <name type="common">Aspergillus nidulans</name>
    <dbReference type="NCBI Taxonomy" id="227321"/>
    <lineage>
        <taxon>Eukaryota</taxon>
        <taxon>Fungi</taxon>
        <taxon>Dikarya</taxon>
        <taxon>Ascomycota</taxon>
        <taxon>Pezizomycotina</taxon>
        <taxon>Eurotiomycetes</taxon>
        <taxon>Eurotiomycetidae</taxon>
        <taxon>Eurotiales</taxon>
        <taxon>Aspergillaceae</taxon>
        <taxon>Aspergillus</taxon>
        <taxon>Aspergillus subgen. Nidulantes</taxon>
    </lineage>
</organism>
<name>PYRF_EMENI</name>
<sequence length="274" mass="30102">MSSKSHLPYAIRATNHPNPLTSKLFSIAEEKKTNVTVSADVTTSAELLDLADRLGPYIAVLKTHIDILTDLTPSTLSSLQSLATKHNFLIFEDRKFIDIGNTVQKQYHGGALRISEWAHIINCAILPGEGIVEALAQTTKSPDFKDANQRGLLILAEMTSKGSLATGEYTARSVEYARKYKGFVMGFVSTRALSEVLPEQKEESEDFVVFTTGVNLSDKGDKLGQQYQTPGSAVGRGADFIIAGRGIYKADDPVEAVQRYREEGWKAYEKRVGL</sequence>